<keyword id="KW-0028">Amino-acid biosynthesis</keyword>
<keyword id="KW-0057">Aromatic amino acid biosynthesis</keyword>
<keyword id="KW-0963">Cytoplasm</keyword>
<keyword id="KW-0808">Transferase</keyword>
<comment type="function">
    <text evidence="1">Catalyzes the transfer of the enolpyruvyl moiety of phosphoenolpyruvate (PEP) to the 5-hydroxyl of shikimate-3-phosphate (S3P) to produce enolpyruvyl shikimate-3-phosphate and inorganic phosphate.</text>
</comment>
<comment type="catalytic activity">
    <reaction evidence="1">
        <text>3-phosphoshikimate + phosphoenolpyruvate = 5-O-(1-carboxyvinyl)-3-phosphoshikimate + phosphate</text>
        <dbReference type="Rhea" id="RHEA:21256"/>
        <dbReference type="ChEBI" id="CHEBI:43474"/>
        <dbReference type="ChEBI" id="CHEBI:57701"/>
        <dbReference type="ChEBI" id="CHEBI:58702"/>
        <dbReference type="ChEBI" id="CHEBI:145989"/>
        <dbReference type="EC" id="2.5.1.19"/>
    </reaction>
    <physiologicalReaction direction="left-to-right" evidence="1">
        <dbReference type="Rhea" id="RHEA:21257"/>
    </physiologicalReaction>
</comment>
<comment type="pathway">
    <text evidence="1">Metabolic intermediate biosynthesis; chorismate biosynthesis; chorismate from D-erythrose 4-phosphate and phosphoenolpyruvate: step 6/7.</text>
</comment>
<comment type="subunit">
    <text evidence="1">Monomer.</text>
</comment>
<comment type="subcellular location">
    <subcellularLocation>
        <location evidence="1">Cytoplasm</location>
    </subcellularLocation>
</comment>
<comment type="similarity">
    <text evidence="1">Belongs to the EPSP synthase family.</text>
</comment>
<dbReference type="EC" id="2.5.1.19" evidence="1"/>
<dbReference type="EMBL" id="CP000875">
    <property type="protein sequence ID" value="ABX03618.1"/>
    <property type="molecule type" value="Genomic_DNA"/>
</dbReference>
<dbReference type="SMR" id="A9AZ72"/>
<dbReference type="FunCoup" id="A9AZ72">
    <property type="interactions" value="376"/>
</dbReference>
<dbReference type="STRING" id="316274.Haur_0970"/>
<dbReference type="KEGG" id="hau:Haur_0970"/>
<dbReference type="eggNOG" id="COG0128">
    <property type="taxonomic scope" value="Bacteria"/>
</dbReference>
<dbReference type="HOGENOM" id="CLU_024321_0_1_0"/>
<dbReference type="InParanoid" id="A9AZ72"/>
<dbReference type="UniPathway" id="UPA00053">
    <property type="reaction ID" value="UER00089"/>
</dbReference>
<dbReference type="Proteomes" id="UP000000787">
    <property type="component" value="Chromosome"/>
</dbReference>
<dbReference type="GO" id="GO:0005737">
    <property type="term" value="C:cytoplasm"/>
    <property type="evidence" value="ECO:0007669"/>
    <property type="project" value="UniProtKB-SubCell"/>
</dbReference>
<dbReference type="GO" id="GO:0003866">
    <property type="term" value="F:3-phosphoshikimate 1-carboxyvinyltransferase activity"/>
    <property type="evidence" value="ECO:0007669"/>
    <property type="project" value="UniProtKB-UniRule"/>
</dbReference>
<dbReference type="GO" id="GO:0008652">
    <property type="term" value="P:amino acid biosynthetic process"/>
    <property type="evidence" value="ECO:0007669"/>
    <property type="project" value="UniProtKB-KW"/>
</dbReference>
<dbReference type="GO" id="GO:0009073">
    <property type="term" value="P:aromatic amino acid family biosynthetic process"/>
    <property type="evidence" value="ECO:0007669"/>
    <property type="project" value="UniProtKB-KW"/>
</dbReference>
<dbReference type="GO" id="GO:0009423">
    <property type="term" value="P:chorismate biosynthetic process"/>
    <property type="evidence" value="ECO:0007669"/>
    <property type="project" value="UniProtKB-UniRule"/>
</dbReference>
<dbReference type="CDD" id="cd01556">
    <property type="entry name" value="EPSP_synthase"/>
    <property type="match status" value="1"/>
</dbReference>
<dbReference type="FunFam" id="3.65.10.10:FF:000005">
    <property type="entry name" value="3-phosphoshikimate 1-carboxyvinyltransferase"/>
    <property type="match status" value="1"/>
</dbReference>
<dbReference type="FunFam" id="3.65.10.10:FF:000006">
    <property type="entry name" value="3-phosphoshikimate 1-carboxyvinyltransferase"/>
    <property type="match status" value="1"/>
</dbReference>
<dbReference type="Gene3D" id="3.65.10.10">
    <property type="entry name" value="Enolpyruvate transferase domain"/>
    <property type="match status" value="2"/>
</dbReference>
<dbReference type="HAMAP" id="MF_00210">
    <property type="entry name" value="EPSP_synth"/>
    <property type="match status" value="1"/>
</dbReference>
<dbReference type="InterPro" id="IPR001986">
    <property type="entry name" value="Enolpyruvate_Tfrase_dom"/>
</dbReference>
<dbReference type="InterPro" id="IPR036968">
    <property type="entry name" value="Enolpyruvate_Tfrase_sf"/>
</dbReference>
<dbReference type="InterPro" id="IPR006264">
    <property type="entry name" value="EPSP_synthase"/>
</dbReference>
<dbReference type="InterPro" id="IPR023193">
    <property type="entry name" value="EPSP_synthase_CS"/>
</dbReference>
<dbReference type="InterPro" id="IPR013792">
    <property type="entry name" value="RNA3'P_cycl/enolpyr_Trfase_a/b"/>
</dbReference>
<dbReference type="NCBIfam" id="TIGR01356">
    <property type="entry name" value="aroA"/>
    <property type="match status" value="1"/>
</dbReference>
<dbReference type="PANTHER" id="PTHR21090">
    <property type="entry name" value="AROM/DEHYDROQUINATE SYNTHASE"/>
    <property type="match status" value="1"/>
</dbReference>
<dbReference type="PANTHER" id="PTHR21090:SF5">
    <property type="entry name" value="PENTAFUNCTIONAL AROM POLYPEPTIDE"/>
    <property type="match status" value="1"/>
</dbReference>
<dbReference type="Pfam" id="PF00275">
    <property type="entry name" value="EPSP_synthase"/>
    <property type="match status" value="1"/>
</dbReference>
<dbReference type="PIRSF" id="PIRSF000505">
    <property type="entry name" value="EPSPS"/>
    <property type="match status" value="1"/>
</dbReference>
<dbReference type="SUPFAM" id="SSF55205">
    <property type="entry name" value="EPT/RTPC-like"/>
    <property type="match status" value="1"/>
</dbReference>
<dbReference type="PROSITE" id="PS00104">
    <property type="entry name" value="EPSP_SYNTHASE_1"/>
    <property type="match status" value="1"/>
</dbReference>
<dbReference type="PROSITE" id="PS00885">
    <property type="entry name" value="EPSP_SYNTHASE_2"/>
    <property type="match status" value="1"/>
</dbReference>
<sequence>MKQTVSHAKRLRGAISVPGDKSISHRSVLFNALAEGNAEITGFLPGADCLSSIACLRQMGVEIEHSDDKVRVFGRGLRGLREPSDVLDCGNSGTTLRLLAGLLAGQPFLSVLTGDASLRSRPQKRIVEPLRQLGAKLDGRDNGNRAPLVIRGTTIHGGNYELPIASAQVKSALLLAGLTGDAPMRLSGKIVSRDHTERMLIAMGIDLTVKDDEIVLYPPSHPVFPYPLSLHVPGDPSSATFWWVAAAIHPDAEITTLGVGLNPSRTGALDVLKAMGADITISNERNEGAEPVGDVTVRGGGLRGTRIDGDLIPRLIDEIPVLAVAAACAVGETVVADAEELRAKETDRVATVVSELTAMGATLEATPDGMIIAGGGELQGAHVQSHGDHRIAMALAVAGLVAEGETIIDEAEAVTVSYPTFWQHYAQIKEA</sequence>
<name>AROA_HERA2</name>
<protein>
    <recommendedName>
        <fullName evidence="1">3-phosphoshikimate 1-carboxyvinyltransferase</fullName>
        <ecNumber evidence="1">2.5.1.19</ecNumber>
    </recommendedName>
    <alternativeName>
        <fullName evidence="1">5-enolpyruvylshikimate-3-phosphate synthase</fullName>
        <shortName evidence="1">EPSP synthase</shortName>
        <shortName evidence="1">EPSPS</shortName>
    </alternativeName>
</protein>
<organism>
    <name type="scientific">Herpetosiphon aurantiacus (strain ATCC 23779 / DSM 785 / 114-95)</name>
    <dbReference type="NCBI Taxonomy" id="316274"/>
    <lineage>
        <taxon>Bacteria</taxon>
        <taxon>Bacillati</taxon>
        <taxon>Chloroflexota</taxon>
        <taxon>Chloroflexia</taxon>
        <taxon>Herpetosiphonales</taxon>
        <taxon>Herpetosiphonaceae</taxon>
        <taxon>Herpetosiphon</taxon>
    </lineage>
</organism>
<accession>A9AZ72</accession>
<gene>
    <name evidence="1" type="primary">aroA</name>
    <name type="ordered locus">Haur_0970</name>
</gene>
<reference key="1">
    <citation type="journal article" date="2011" name="Stand. Genomic Sci.">
        <title>Complete genome sequence of the filamentous gliding predatory bacterium Herpetosiphon aurantiacus type strain (114-95(T)).</title>
        <authorList>
            <person name="Kiss H."/>
            <person name="Nett M."/>
            <person name="Domin N."/>
            <person name="Martin K."/>
            <person name="Maresca J.A."/>
            <person name="Copeland A."/>
            <person name="Lapidus A."/>
            <person name="Lucas S."/>
            <person name="Berry K.W."/>
            <person name="Glavina Del Rio T."/>
            <person name="Dalin E."/>
            <person name="Tice H."/>
            <person name="Pitluck S."/>
            <person name="Richardson P."/>
            <person name="Bruce D."/>
            <person name="Goodwin L."/>
            <person name="Han C."/>
            <person name="Detter J.C."/>
            <person name="Schmutz J."/>
            <person name="Brettin T."/>
            <person name="Land M."/>
            <person name="Hauser L."/>
            <person name="Kyrpides N.C."/>
            <person name="Ivanova N."/>
            <person name="Goeker M."/>
            <person name="Woyke T."/>
            <person name="Klenk H.P."/>
            <person name="Bryant D.A."/>
        </authorList>
    </citation>
    <scope>NUCLEOTIDE SEQUENCE [LARGE SCALE GENOMIC DNA]</scope>
    <source>
        <strain>ATCC 23779 / DSM 785 / 114-95</strain>
    </source>
</reference>
<proteinExistence type="inferred from homology"/>
<feature type="chain" id="PRO_1000099708" description="3-phosphoshikimate 1-carboxyvinyltransferase">
    <location>
        <begin position="1"/>
        <end position="431"/>
    </location>
</feature>
<feature type="active site" description="Proton acceptor" evidence="1">
    <location>
        <position position="317"/>
    </location>
</feature>
<feature type="binding site" evidence="1">
    <location>
        <position position="21"/>
    </location>
    <ligand>
        <name>3-phosphoshikimate</name>
        <dbReference type="ChEBI" id="CHEBI:145989"/>
    </ligand>
</feature>
<feature type="binding site" evidence="1">
    <location>
        <position position="21"/>
    </location>
    <ligand>
        <name>phosphoenolpyruvate</name>
        <dbReference type="ChEBI" id="CHEBI:58702"/>
    </ligand>
</feature>
<feature type="binding site" evidence="1">
    <location>
        <position position="22"/>
    </location>
    <ligand>
        <name>3-phosphoshikimate</name>
        <dbReference type="ChEBI" id="CHEBI:145989"/>
    </ligand>
</feature>
<feature type="binding site" evidence="1">
    <location>
        <position position="26"/>
    </location>
    <ligand>
        <name>3-phosphoshikimate</name>
        <dbReference type="ChEBI" id="CHEBI:145989"/>
    </ligand>
</feature>
<feature type="binding site" evidence="1">
    <location>
        <position position="93"/>
    </location>
    <ligand>
        <name>phosphoenolpyruvate</name>
        <dbReference type="ChEBI" id="CHEBI:58702"/>
    </ligand>
</feature>
<feature type="binding site" evidence="1">
    <location>
        <position position="121"/>
    </location>
    <ligand>
        <name>phosphoenolpyruvate</name>
        <dbReference type="ChEBI" id="CHEBI:58702"/>
    </ligand>
</feature>
<feature type="binding site" evidence="1">
    <location>
        <position position="166"/>
    </location>
    <ligand>
        <name>3-phosphoshikimate</name>
        <dbReference type="ChEBI" id="CHEBI:145989"/>
    </ligand>
</feature>
<feature type="binding site" evidence="1">
    <location>
        <position position="168"/>
    </location>
    <ligand>
        <name>3-phosphoshikimate</name>
        <dbReference type="ChEBI" id="CHEBI:145989"/>
    </ligand>
</feature>
<feature type="binding site" evidence="1">
    <location>
        <position position="168"/>
    </location>
    <ligand>
        <name>phosphoenolpyruvate</name>
        <dbReference type="ChEBI" id="CHEBI:58702"/>
    </ligand>
</feature>
<feature type="binding site" evidence="1">
    <location>
        <position position="192"/>
    </location>
    <ligand>
        <name>3-phosphoshikimate</name>
        <dbReference type="ChEBI" id="CHEBI:145989"/>
    </ligand>
</feature>
<feature type="binding site" evidence="1">
    <location>
        <position position="317"/>
    </location>
    <ligand>
        <name>3-phosphoshikimate</name>
        <dbReference type="ChEBI" id="CHEBI:145989"/>
    </ligand>
</feature>
<feature type="binding site" evidence="1">
    <location>
        <position position="344"/>
    </location>
    <ligand>
        <name>3-phosphoshikimate</name>
        <dbReference type="ChEBI" id="CHEBI:145989"/>
    </ligand>
</feature>
<feature type="binding site" evidence="1">
    <location>
        <position position="348"/>
    </location>
    <ligand>
        <name>phosphoenolpyruvate</name>
        <dbReference type="ChEBI" id="CHEBI:58702"/>
    </ligand>
</feature>
<feature type="binding site" evidence="1">
    <location>
        <position position="390"/>
    </location>
    <ligand>
        <name>phosphoenolpyruvate</name>
        <dbReference type="ChEBI" id="CHEBI:58702"/>
    </ligand>
</feature>
<evidence type="ECO:0000255" key="1">
    <source>
        <dbReference type="HAMAP-Rule" id="MF_00210"/>
    </source>
</evidence>